<protein>
    <recommendedName>
        <fullName evidence="1">Phospho-N-acetylmuramoyl-pentapeptide-transferase</fullName>
        <ecNumber evidence="1">2.7.8.13</ecNumber>
    </recommendedName>
    <alternativeName>
        <fullName evidence="1">UDP-MurNAc-pentapeptide phosphotransferase</fullName>
    </alternativeName>
</protein>
<evidence type="ECO:0000255" key="1">
    <source>
        <dbReference type="HAMAP-Rule" id="MF_00038"/>
    </source>
</evidence>
<dbReference type="EC" id="2.7.8.13" evidence="1"/>
<dbReference type="EMBL" id="AE014133">
    <property type="protein sequence ID" value="AAN58205.1"/>
    <property type="molecule type" value="Genomic_DNA"/>
</dbReference>
<dbReference type="RefSeq" id="NP_720899.1">
    <property type="nucleotide sequence ID" value="NC_004350.2"/>
</dbReference>
<dbReference type="RefSeq" id="WP_002262090.1">
    <property type="nucleotide sequence ID" value="NC_004350.2"/>
</dbReference>
<dbReference type="SMR" id="Q8DVM4"/>
<dbReference type="STRING" id="210007.SMU_456"/>
<dbReference type="DNASU" id="1027963"/>
<dbReference type="KEGG" id="smu:SMU_456"/>
<dbReference type="PATRIC" id="fig|210007.7.peg.400"/>
<dbReference type="eggNOG" id="COG0472">
    <property type="taxonomic scope" value="Bacteria"/>
</dbReference>
<dbReference type="HOGENOM" id="CLU_023982_0_1_9"/>
<dbReference type="OrthoDB" id="9805475at2"/>
<dbReference type="PhylomeDB" id="Q8DVM4"/>
<dbReference type="UniPathway" id="UPA00219"/>
<dbReference type="Proteomes" id="UP000002512">
    <property type="component" value="Chromosome"/>
</dbReference>
<dbReference type="GO" id="GO:0005886">
    <property type="term" value="C:plasma membrane"/>
    <property type="evidence" value="ECO:0007669"/>
    <property type="project" value="UniProtKB-SubCell"/>
</dbReference>
<dbReference type="GO" id="GO:0046872">
    <property type="term" value="F:metal ion binding"/>
    <property type="evidence" value="ECO:0007669"/>
    <property type="project" value="UniProtKB-KW"/>
</dbReference>
<dbReference type="GO" id="GO:0008963">
    <property type="term" value="F:phospho-N-acetylmuramoyl-pentapeptide-transferase activity"/>
    <property type="evidence" value="ECO:0007669"/>
    <property type="project" value="UniProtKB-UniRule"/>
</dbReference>
<dbReference type="GO" id="GO:0051301">
    <property type="term" value="P:cell division"/>
    <property type="evidence" value="ECO:0007669"/>
    <property type="project" value="UniProtKB-KW"/>
</dbReference>
<dbReference type="GO" id="GO:0071555">
    <property type="term" value="P:cell wall organization"/>
    <property type="evidence" value="ECO:0007669"/>
    <property type="project" value="UniProtKB-KW"/>
</dbReference>
<dbReference type="GO" id="GO:0009252">
    <property type="term" value="P:peptidoglycan biosynthetic process"/>
    <property type="evidence" value="ECO:0007669"/>
    <property type="project" value="UniProtKB-UniRule"/>
</dbReference>
<dbReference type="GO" id="GO:0008360">
    <property type="term" value="P:regulation of cell shape"/>
    <property type="evidence" value="ECO:0007669"/>
    <property type="project" value="UniProtKB-KW"/>
</dbReference>
<dbReference type="CDD" id="cd06852">
    <property type="entry name" value="GT_MraY"/>
    <property type="match status" value="1"/>
</dbReference>
<dbReference type="HAMAP" id="MF_00038">
    <property type="entry name" value="MraY"/>
    <property type="match status" value="1"/>
</dbReference>
<dbReference type="InterPro" id="IPR000715">
    <property type="entry name" value="Glycosyl_transferase_4"/>
</dbReference>
<dbReference type="InterPro" id="IPR003524">
    <property type="entry name" value="PNAcMuramoyl-5peptid_Trfase"/>
</dbReference>
<dbReference type="InterPro" id="IPR018480">
    <property type="entry name" value="PNAcMuramoyl-5peptid_Trfase_CS"/>
</dbReference>
<dbReference type="NCBIfam" id="TIGR00445">
    <property type="entry name" value="mraY"/>
    <property type="match status" value="1"/>
</dbReference>
<dbReference type="PANTHER" id="PTHR22926">
    <property type="entry name" value="PHOSPHO-N-ACETYLMURAMOYL-PENTAPEPTIDE-TRANSFERASE"/>
    <property type="match status" value="1"/>
</dbReference>
<dbReference type="PANTHER" id="PTHR22926:SF5">
    <property type="entry name" value="PHOSPHO-N-ACETYLMURAMOYL-PENTAPEPTIDE-TRANSFERASE HOMOLOG"/>
    <property type="match status" value="1"/>
</dbReference>
<dbReference type="Pfam" id="PF00953">
    <property type="entry name" value="Glycos_transf_4"/>
    <property type="match status" value="1"/>
</dbReference>
<dbReference type="Pfam" id="PF10555">
    <property type="entry name" value="MraY_sig1"/>
    <property type="match status" value="1"/>
</dbReference>
<dbReference type="PROSITE" id="PS01348">
    <property type="entry name" value="MRAY_2"/>
    <property type="match status" value="1"/>
</dbReference>
<organism>
    <name type="scientific">Streptococcus mutans serotype c (strain ATCC 700610 / UA159)</name>
    <dbReference type="NCBI Taxonomy" id="210007"/>
    <lineage>
        <taxon>Bacteria</taxon>
        <taxon>Bacillati</taxon>
        <taxon>Bacillota</taxon>
        <taxon>Bacilli</taxon>
        <taxon>Lactobacillales</taxon>
        <taxon>Streptococcaceae</taxon>
        <taxon>Streptococcus</taxon>
    </lineage>
</organism>
<gene>
    <name evidence="1" type="primary">mraY</name>
    <name type="ordered locus">SMU_456</name>
</gene>
<keyword id="KW-0131">Cell cycle</keyword>
<keyword id="KW-0132">Cell division</keyword>
<keyword id="KW-1003">Cell membrane</keyword>
<keyword id="KW-0133">Cell shape</keyword>
<keyword id="KW-0961">Cell wall biogenesis/degradation</keyword>
<keyword id="KW-0460">Magnesium</keyword>
<keyword id="KW-0472">Membrane</keyword>
<keyword id="KW-0479">Metal-binding</keyword>
<keyword id="KW-0573">Peptidoglycan synthesis</keyword>
<keyword id="KW-1185">Reference proteome</keyword>
<keyword id="KW-0808">Transferase</keyword>
<keyword id="KW-0812">Transmembrane</keyword>
<keyword id="KW-1133">Transmembrane helix</keyword>
<sequence>MLTTTIIAGIISFILTILAMPFFIRFYQLKKINGQQMHEDVKQHLAKAGTPTMGGTVFLLVAALVTFICAFVLHITGGPAFGATLAILFIVLIYGTIGFLDDFLKIFKKINQGLTAWQKMALQLIGGLVFYLVHVKPSGTDSLNLFGFPLHLGVFYIIFILFWVVGFSNAVNLTDGIDGLASISVVISLLTYSVIAYVQNQFDVLLIIISMVGALLGFFVYNHKPAKVFMGDVGSLALGAMLAAISITLRQEWTLLIIGIVYVLETASVMLQVSYFKWTKKRKGEGQRIFRMTPFHHHLELGGLRLRESGKKWSEWQVDFFLWSIGLLGSLLILAILYL</sequence>
<name>MRAY_STRMU</name>
<comment type="function">
    <text evidence="1">Catalyzes the initial step of the lipid cycle reactions in the biosynthesis of the cell wall peptidoglycan: transfers peptidoglycan precursor phospho-MurNAc-pentapeptide from UDP-MurNAc-pentapeptide onto the lipid carrier undecaprenyl phosphate, yielding undecaprenyl-pyrophosphoryl-MurNAc-pentapeptide, known as lipid I.</text>
</comment>
<comment type="catalytic activity">
    <reaction evidence="1">
        <text>UDP-N-acetyl-alpha-D-muramoyl-L-alanyl-gamma-D-glutamyl-L-lysyl-D-alanyl-D-alanine + di-trans,octa-cis-undecaprenyl phosphate = Mur2Ac(oyl-L-Ala-gamma-D-Glu-L-Lys-D-Ala-D-Ala)-di-trans,octa-cis-undecaprenyl diphosphate + UMP</text>
        <dbReference type="Rhea" id="RHEA:21920"/>
        <dbReference type="ChEBI" id="CHEBI:57865"/>
        <dbReference type="ChEBI" id="CHEBI:60032"/>
        <dbReference type="ChEBI" id="CHEBI:60392"/>
        <dbReference type="ChEBI" id="CHEBI:70758"/>
        <dbReference type="EC" id="2.7.8.13"/>
    </reaction>
</comment>
<comment type="cofactor">
    <cofactor evidence="1">
        <name>Mg(2+)</name>
        <dbReference type="ChEBI" id="CHEBI:18420"/>
    </cofactor>
</comment>
<comment type="pathway">
    <text evidence="1">Cell wall biogenesis; peptidoglycan biosynthesis.</text>
</comment>
<comment type="subcellular location">
    <subcellularLocation>
        <location evidence="1">Cell membrane</location>
        <topology evidence="1">Multi-pass membrane protein</topology>
    </subcellularLocation>
</comment>
<comment type="similarity">
    <text evidence="1">Belongs to the glycosyltransferase 4 family. MraY subfamily.</text>
</comment>
<reference key="1">
    <citation type="journal article" date="2002" name="Proc. Natl. Acad. Sci. U.S.A.">
        <title>Genome sequence of Streptococcus mutans UA159, a cariogenic dental pathogen.</title>
        <authorList>
            <person name="Ajdic D.J."/>
            <person name="McShan W.M."/>
            <person name="McLaughlin R.E."/>
            <person name="Savic G."/>
            <person name="Chang J."/>
            <person name="Carson M.B."/>
            <person name="Primeaux C."/>
            <person name="Tian R."/>
            <person name="Kenton S."/>
            <person name="Jia H.G."/>
            <person name="Lin S.P."/>
            <person name="Qian Y."/>
            <person name="Li S."/>
            <person name="Zhu H."/>
            <person name="Najar F.Z."/>
            <person name="Lai H."/>
            <person name="White J."/>
            <person name="Roe B.A."/>
            <person name="Ferretti J.J."/>
        </authorList>
    </citation>
    <scope>NUCLEOTIDE SEQUENCE [LARGE SCALE GENOMIC DNA]</scope>
    <source>
        <strain>ATCC 700610 / UA159</strain>
    </source>
</reference>
<proteinExistence type="inferred from homology"/>
<accession>Q8DVM4</accession>
<feature type="chain" id="PRO_0000108903" description="Phospho-N-acetylmuramoyl-pentapeptide-transferase">
    <location>
        <begin position="1"/>
        <end position="339"/>
    </location>
</feature>
<feature type="transmembrane region" description="Helical" evidence="1">
    <location>
        <begin position="4"/>
        <end position="24"/>
    </location>
</feature>
<feature type="transmembrane region" description="Helical" evidence="1">
    <location>
        <begin position="53"/>
        <end position="73"/>
    </location>
</feature>
<feature type="transmembrane region" description="Helical" evidence="1">
    <location>
        <begin position="80"/>
        <end position="100"/>
    </location>
</feature>
<feature type="transmembrane region" description="Helical" evidence="1">
    <location>
        <begin position="113"/>
        <end position="133"/>
    </location>
</feature>
<feature type="transmembrane region" description="Helical" evidence="1">
    <location>
        <begin position="145"/>
        <end position="165"/>
    </location>
</feature>
<feature type="transmembrane region" description="Helical" evidence="1">
    <location>
        <begin position="176"/>
        <end position="196"/>
    </location>
</feature>
<feature type="transmembrane region" description="Helical" evidence="1">
    <location>
        <begin position="202"/>
        <end position="222"/>
    </location>
</feature>
<feature type="transmembrane region" description="Helical" evidence="1">
    <location>
        <begin position="228"/>
        <end position="248"/>
    </location>
</feature>
<feature type="transmembrane region" description="Helical" evidence="1">
    <location>
        <begin position="253"/>
        <end position="273"/>
    </location>
</feature>
<feature type="transmembrane region" description="Helical" evidence="1">
    <location>
        <begin position="318"/>
        <end position="338"/>
    </location>
</feature>